<protein>
    <recommendedName>
        <fullName evidence="6">Exocyst complex component SEC15B</fullName>
        <shortName evidence="6">AtSec15b</shortName>
    </recommendedName>
</protein>
<comment type="function">
    <text evidence="2">Component of the exocyst complex involved in the docking of exocytic vesicles with fusion sites on the plasma membrane during regulated or polarized secretion. Involved in polarized cell growth and organ morphogenesis. During cytokinesis, involved in cell plate initiation, cell plate maturation and formation of new primary cell wall.</text>
</comment>
<comment type="subunit">
    <text evidence="2 3 5">The exocyst complex is composed of SEC3, SEC5, SEC6, SEC8, SEC10, EXO70A1 and EXO84B. Interacts with EXO84B. Binds to EXO70H1 AND EXO70B2 (PubMed:21199889). Binds directly to B1L (PubMed:35249253).</text>
</comment>
<comment type="subcellular location">
    <subcellularLocation>
        <location evidence="1 4">Cytoplasm</location>
        <location evidence="1 4">Cytosol</location>
    </subcellularLocation>
    <subcellularLocation>
        <location evidence="2">Cytoplasm</location>
        <location evidence="2">Cytoskeleton</location>
        <location evidence="2">Phragmoplast</location>
    </subcellularLocation>
    <subcellularLocation>
        <location evidence="2">Secreted</location>
        <location evidence="2">Cell wall</location>
    </subcellularLocation>
    <subcellularLocation>
        <location evidence="4">Secreted</location>
        <location evidence="4">Extracellular exosome</location>
    </subcellularLocation>
    <text evidence="2 4">Localized to globular structures in the perinuclear region. During cytokinesis, localizes to the nascent cell plate and later to the cell plate insertion site and along the post-cytokinetic wall. Shuttles from the cytoplasm to the exocyst-positive organelle (EXPO) in the presence of EXO70E2 (PubMed:24307681).</text>
</comment>
<comment type="similarity">
    <text evidence="7">Belongs to the SEC15 family.</text>
</comment>
<comment type="sequence caution" evidence="7">
    <conflict type="erroneous gene model prediction">
        <sequence resource="EMBL-CDS" id="AAC19268"/>
    </conflict>
</comment>
<comment type="sequence caution" evidence="7">
    <conflict type="erroneous gene model prediction">
        <sequence resource="EMBL-CDS" id="CAB80728"/>
    </conflict>
</comment>
<feature type="chain" id="PRO_0000424572" description="Exocyst complex component SEC15B">
    <location>
        <begin position="1"/>
        <end position="787"/>
    </location>
</feature>
<organism>
    <name type="scientific">Arabidopsis thaliana</name>
    <name type="common">Mouse-ear cress</name>
    <dbReference type="NCBI Taxonomy" id="3702"/>
    <lineage>
        <taxon>Eukaryota</taxon>
        <taxon>Viridiplantae</taxon>
        <taxon>Streptophyta</taxon>
        <taxon>Embryophyta</taxon>
        <taxon>Tracheophyta</taxon>
        <taxon>Spermatophyta</taxon>
        <taxon>Magnoliopsida</taxon>
        <taxon>eudicotyledons</taxon>
        <taxon>Gunneridae</taxon>
        <taxon>Pentapetalae</taxon>
        <taxon>rosids</taxon>
        <taxon>malvids</taxon>
        <taxon>Brassicales</taxon>
        <taxon>Brassicaceae</taxon>
        <taxon>Camelineae</taxon>
        <taxon>Arabidopsis</taxon>
    </lineage>
</organism>
<name>SC15B_ARATH</name>
<keyword id="KW-0134">Cell wall</keyword>
<keyword id="KW-0963">Cytoplasm</keyword>
<keyword id="KW-0206">Cytoskeleton</keyword>
<keyword id="KW-0268">Exocytosis</keyword>
<keyword id="KW-1185">Reference proteome</keyword>
<keyword id="KW-0964">Secreted</keyword>
<keyword id="KW-0813">Transport</keyword>
<gene>
    <name evidence="6" type="primary">SEC15B</name>
    <name evidence="8" type="ordered locus">At4g02350</name>
    <name evidence="9" type="ORF">T14P8.16</name>
</gene>
<accession>F4JHH5</accession>
<accession>O81298</accession>
<proteinExistence type="evidence at protein level"/>
<dbReference type="EMBL" id="AF069298">
    <property type="protein sequence ID" value="AAC19268.1"/>
    <property type="status" value="ALT_SEQ"/>
    <property type="molecule type" value="Genomic_DNA"/>
</dbReference>
<dbReference type="EMBL" id="AL161494">
    <property type="protein sequence ID" value="CAB80728.1"/>
    <property type="status" value="ALT_SEQ"/>
    <property type="molecule type" value="Genomic_DNA"/>
</dbReference>
<dbReference type="EMBL" id="CP002687">
    <property type="protein sequence ID" value="AEE82158.1"/>
    <property type="molecule type" value="Genomic_DNA"/>
</dbReference>
<dbReference type="EMBL" id="CP002687">
    <property type="protein sequence ID" value="ANM67295.1"/>
    <property type="molecule type" value="Genomic_DNA"/>
</dbReference>
<dbReference type="PIR" id="T01315">
    <property type="entry name" value="T01315"/>
</dbReference>
<dbReference type="RefSeq" id="NP_001319844.1">
    <property type="nucleotide sequence ID" value="NM_001340371.1"/>
</dbReference>
<dbReference type="RefSeq" id="NP_567229.2">
    <property type="nucleotide sequence ID" value="NM_116468.4"/>
</dbReference>
<dbReference type="SMR" id="F4JHH5"/>
<dbReference type="BioGRID" id="13351">
    <property type="interactions" value="5"/>
</dbReference>
<dbReference type="FunCoup" id="F4JHH5">
    <property type="interactions" value="3904"/>
</dbReference>
<dbReference type="IntAct" id="F4JHH5">
    <property type="interactions" value="2"/>
</dbReference>
<dbReference type="STRING" id="3702.F4JHH5"/>
<dbReference type="iPTMnet" id="F4JHH5"/>
<dbReference type="PaxDb" id="3702-AT4G02350.1"/>
<dbReference type="ProteomicsDB" id="226595"/>
<dbReference type="EnsemblPlants" id="AT4G02350.1">
    <property type="protein sequence ID" value="AT4G02350.1"/>
    <property type="gene ID" value="AT4G02350"/>
</dbReference>
<dbReference type="EnsemblPlants" id="AT4G02350.2">
    <property type="protein sequence ID" value="AT4G02350.2"/>
    <property type="gene ID" value="AT4G02350"/>
</dbReference>
<dbReference type="GeneID" id="828060"/>
<dbReference type="Gramene" id="AT4G02350.1">
    <property type="protein sequence ID" value="AT4G02350.1"/>
    <property type="gene ID" value="AT4G02350"/>
</dbReference>
<dbReference type="Gramene" id="AT4G02350.2">
    <property type="protein sequence ID" value="AT4G02350.2"/>
    <property type="gene ID" value="AT4G02350"/>
</dbReference>
<dbReference type="KEGG" id="ath:AT4G02350"/>
<dbReference type="Araport" id="AT4G02350"/>
<dbReference type="TAIR" id="AT4G02350">
    <property type="gene designation" value="SEC15B"/>
</dbReference>
<dbReference type="eggNOG" id="KOG2176">
    <property type="taxonomic scope" value="Eukaryota"/>
</dbReference>
<dbReference type="HOGENOM" id="CLU_019671_0_0_1"/>
<dbReference type="InParanoid" id="F4JHH5"/>
<dbReference type="OMA" id="FPFHSEQ"/>
<dbReference type="PRO" id="PR:F4JHH5"/>
<dbReference type="Proteomes" id="UP000006548">
    <property type="component" value="Chromosome 4"/>
</dbReference>
<dbReference type="ExpressionAtlas" id="F4JHH5">
    <property type="expression patterns" value="baseline and differential"/>
</dbReference>
<dbReference type="GO" id="GO:0005856">
    <property type="term" value="C:cytoskeleton"/>
    <property type="evidence" value="ECO:0007669"/>
    <property type="project" value="UniProtKB-KW"/>
</dbReference>
<dbReference type="GO" id="GO:0005829">
    <property type="term" value="C:cytosol"/>
    <property type="evidence" value="ECO:0000314"/>
    <property type="project" value="UniProtKB"/>
</dbReference>
<dbReference type="GO" id="GO:0000145">
    <property type="term" value="C:exocyst"/>
    <property type="evidence" value="ECO:0000314"/>
    <property type="project" value="TAIR"/>
</dbReference>
<dbReference type="GO" id="GO:0070062">
    <property type="term" value="C:extracellular exosome"/>
    <property type="evidence" value="ECO:0000314"/>
    <property type="project" value="UniProtKB"/>
</dbReference>
<dbReference type="GO" id="GO:0009524">
    <property type="term" value="C:phragmoplast"/>
    <property type="evidence" value="ECO:0007669"/>
    <property type="project" value="UniProtKB-SubCell"/>
</dbReference>
<dbReference type="GO" id="GO:0005886">
    <property type="term" value="C:plasma membrane"/>
    <property type="evidence" value="ECO:0007005"/>
    <property type="project" value="TAIR"/>
</dbReference>
<dbReference type="GO" id="GO:0009506">
    <property type="term" value="C:plasmodesma"/>
    <property type="evidence" value="ECO:0007005"/>
    <property type="project" value="TAIR"/>
</dbReference>
<dbReference type="GO" id="GO:0060321">
    <property type="term" value="P:acceptance of pollen"/>
    <property type="evidence" value="ECO:0000315"/>
    <property type="project" value="TAIR"/>
</dbReference>
<dbReference type="GO" id="GO:0006886">
    <property type="term" value="P:intracellular protein transport"/>
    <property type="evidence" value="ECO:0007669"/>
    <property type="project" value="InterPro"/>
</dbReference>
<dbReference type="GO" id="GO:0009846">
    <property type="term" value="P:pollen germination"/>
    <property type="evidence" value="ECO:0000315"/>
    <property type="project" value="TAIR"/>
</dbReference>
<dbReference type="GO" id="GO:0009860">
    <property type="term" value="P:pollen tube growth"/>
    <property type="evidence" value="ECO:0000315"/>
    <property type="project" value="TAIR"/>
</dbReference>
<dbReference type="GO" id="GO:0090522">
    <property type="term" value="P:vesicle tethering involved in exocytosis"/>
    <property type="evidence" value="ECO:0007669"/>
    <property type="project" value="InterPro"/>
</dbReference>
<dbReference type="FunFam" id="1.10.357.30:FF:000002">
    <property type="entry name" value="Exocyst complex component"/>
    <property type="match status" value="1"/>
</dbReference>
<dbReference type="FunFam" id="1.20.58.670:FF:000002">
    <property type="entry name" value="Exocyst complex component"/>
    <property type="match status" value="1"/>
</dbReference>
<dbReference type="Gene3D" id="1.20.58.670">
    <property type="entry name" value="Dsl1p vesicle tethering complex, Tip20p subunit, domain D"/>
    <property type="match status" value="1"/>
</dbReference>
<dbReference type="Gene3D" id="1.10.357.30">
    <property type="entry name" value="Exocyst complex subunit Sec15 C-terminal domain, N-terminal subdomain"/>
    <property type="match status" value="1"/>
</dbReference>
<dbReference type="InterPro" id="IPR007225">
    <property type="entry name" value="EXOC6/Sec15"/>
</dbReference>
<dbReference type="InterPro" id="IPR046361">
    <property type="entry name" value="EXOC6/Sec15_C"/>
</dbReference>
<dbReference type="InterPro" id="IPR042045">
    <property type="entry name" value="EXOC6/Sec15_C_dom1"/>
</dbReference>
<dbReference type="InterPro" id="IPR048359">
    <property type="entry name" value="EXOC6_Sec15_N"/>
</dbReference>
<dbReference type="InterPro" id="IPR042044">
    <property type="entry name" value="EXOC6PINT-1/Sec15/Tip20_C_dom2"/>
</dbReference>
<dbReference type="PANTHER" id="PTHR12702:SF1">
    <property type="entry name" value="EXOCYST COMPLEX COMPONENT SEC15B"/>
    <property type="match status" value="1"/>
</dbReference>
<dbReference type="PANTHER" id="PTHR12702">
    <property type="entry name" value="SEC15"/>
    <property type="match status" value="1"/>
</dbReference>
<dbReference type="Pfam" id="PF20651">
    <property type="entry name" value="EXOC6_Sec15_N"/>
    <property type="match status" value="1"/>
</dbReference>
<dbReference type="Pfam" id="PF04091">
    <property type="entry name" value="Sec15_C"/>
    <property type="match status" value="1"/>
</dbReference>
<dbReference type="PIRSF" id="PIRSF025007">
    <property type="entry name" value="Sec15"/>
    <property type="match status" value="1"/>
</dbReference>
<sequence>MQSSKGRRKVGSTTAGAGIDSAEKLDELLISSAICNGEDLGPFVRKTFGTGKPETLLHHLKFFARSKESEIEEVCKAHYQDFIHAVDDLKSLLSDVESLKSALSDSNSKLQSVAAPLLSSLDSLVEAQTVSKNVDLAIGAVTHCVRVMELVSRANQHLQSGNFYMALKCVDSIESDFMEKTPSSTLKRMLENRIPAIRSYVERKVNKEFGDWLVEIRVVSRNLGQLAIGEASAARQREEELRIKQRQAEEQSRLSLRDCVYALNEEEDDEFGSGHEGSDGGSSGGGLLGFDLTPLYRAYHIHQTLSLGDTFKQYYYNNRDLQLTSDFQIAGFFIVEDRVLRTGGGLISKLEVETLWDTAVTKMCAVLEDQFSRMQTANHLLLIKDYVSLLGVSLRRYGYAVDSLLEVLSKHRDKYHELLLSDCRKQITEALSADKFEQMLMKKEYEYSMNVLSFQLQTSEIVPAFPFIAPFSTTVPDCCRIVRSFIEDSVSFMSHGGQLDFYDVVKKYLDRLLGEVLDEALLKLISTSVHGVSQAMQVAANMAVFERACDFFFRHAAHLSGVPLRMAERGRRHFPLTKSQNTAEDTLSGMLKKKIDGFMTLLENVNWTSDDIPQGGNEYMNEVLIYLETLVSTAQQILPAKVLKRVLRDVLAHISEKIVGTLCGDLVKRLSMAAIKGLDVDIQLLDSFTENLTPLLTDKEAREMKKAFVEIRQMINLLLSSHPENFVNPVIRERSYNALDYRKVATVSEKFRDPSDSIFGTFGTRGSRQNPKNKSLDALIKRLKDVS</sequence>
<evidence type="ECO:0000269" key="1">
    <source>
    </source>
</evidence>
<evidence type="ECO:0000269" key="2">
    <source>
    </source>
</evidence>
<evidence type="ECO:0000269" key="3">
    <source>
    </source>
</evidence>
<evidence type="ECO:0000269" key="4">
    <source>
    </source>
</evidence>
<evidence type="ECO:0000269" key="5">
    <source>
    </source>
</evidence>
<evidence type="ECO:0000303" key="6">
    <source>
    </source>
</evidence>
<evidence type="ECO:0000305" key="7"/>
<evidence type="ECO:0000312" key="8">
    <source>
        <dbReference type="Araport" id="AT4G02350"/>
    </source>
</evidence>
<evidence type="ECO:0000312" key="9">
    <source>
        <dbReference type="EMBL" id="AAC19268.1"/>
    </source>
</evidence>
<reference key="1">
    <citation type="journal article" date="1999" name="Nature">
        <title>Sequence and analysis of chromosome 4 of the plant Arabidopsis thaliana.</title>
        <authorList>
            <person name="Mayer K.F.X."/>
            <person name="Schueller C."/>
            <person name="Wambutt R."/>
            <person name="Murphy G."/>
            <person name="Volckaert G."/>
            <person name="Pohl T."/>
            <person name="Duesterhoeft A."/>
            <person name="Stiekema W."/>
            <person name="Entian K.-D."/>
            <person name="Terryn N."/>
            <person name="Harris B."/>
            <person name="Ansorge W."/>
            <person name="Brandt P."/>
            <person name="Grivell L.A."/>
            <person name="Rieger M."/>
            <person name="Weichselgartner M."/>
            <person name="de Simone V."/>
            <person name="Obermaier B."/>
            <person name="Mache R."/>
            <person name="Mueller M."/>
            <person name="Kreis M."/>
            <person name="Delseny M."/>
            <person name="Puigdomenech P."/>
            <person name="Watson M."/>
            <person name="Schmidtheini T."/>
            <person name="Reichert B."/>
            <person name="Portetelle D."/>
            <person name="Perez-Alonso M."/>
            <person name="Boutry M."/>
            <person name="Bancroft I."/>
            <person name="Vos P."/>
            <person name="Hoheisel J."/>
            <person name="Zimmermann W."/>
            <person name="Wedler H."/>
            <person name="Ridley P."/>
            <person name="Langham S.-A."/>
            <person name="McCullagh B."/>
            <person name="Bilham L."/>
            <person name="Robben J."/>
            <person name="van der Schueren J."/>
            <person name="Grymonprez B."/>
            <person name="Chuang Y.-J."/>
            <person name="Vandenbussche F."/>
            <person name="Braeken M."/>
            <person name="Weltjens I."/>
            <person name="Voet M."/>
            <person name="Bastiaens I."/>
            <person name="Aert R."/>
            <person name="Defoor E."/>
            <person name="Weitzenegger T."/>
            <person name="Bothe G."/>
            <person name="Ramsperger U."/>
            <person name="Hilbert H."/>
            <person name="Braun M."/>
            <person name="Holzer E."/>
            <person name="Brandt A."/>
            <person name="Peters S."/>
            <person name="van Staveren M."/>
            <person name="Dirkse W."/>
            <person name="Mooijman P."/>
            <person name="Klein Lankhorst R."/>
            <person name="Rose M."/>
            <person name="Hauf J."/>
            <person name="Koetter P."/>
            <person name="Berneiser S."/>
            <person name="Hempel S."/>
            <person name="Feldpausch M."/>
            <person name="Lamberth S."/>
            <person name="Van den Daele H."/>
            <person name="De Keyser A."/>
            <person name="Buysshaert C."/>
            <person name="Gielen J."/>
            <person name="Villarroel R."/>
            <person name="De Clercq R."/>
            <person name="van Montagu M."/>
            <person name="Rogers J."/>
            <person name="Cronin A."/>
            <person name="Quail M.A."/>
            <person name="Bray-Allen S."/>
            <person name="Clark L."/>
            <person name="Doggett J."/>
            <person name="Hall S."/>
            <person name="Kay M."/>
            <person name="Lennard N."/>
            <person name="McLay K."/>
            <person name="Mayes R."/>
            <person name="Pettett A."/>
            <person name="Rajandream M.A."/>
            <person name="Lyne M."/>
            <person name="Benes V."/>
            <person name="Rechmann S."/>
            <person name="Borkova D."/>
            <person name="Bloecker H."/>
            <person name="Scharfe M."/>
            <person name="Grimm M."/>
            <person name="Loehnert T.-H."/>
            <person name="Dose S."/>
            <person name="de Haan M."/>
            <person name="Maarse A.C."/>
            <person name="Schaefer M."/>
            <person name="Mueller-Auer S."/>
            <person name="Gabel C."/>
            <person name="Fuchs M."/>
            <person name="Fartmann B."/>
            <person name="Granderath K."/>
            <person name="Dauner D."/>
            <person name="Herzl A."/>
            <person name="Neumann S."/>
            <person name="Argiriou A."/>
            <person name="Vitale D."/>
            <person name="Liguori R."/>
            <person name="Piravandi E."/>
            <person name="Massenet O."/>
            <person name="Quigley F."/>
            <person name="Clabauld G."/>
            <person name="Muendlein A."/>
            <person name="Felber R."/>
            <person name="Schnabl S."/>
            <person name="Hiller R."/>
            <person name="Schmidt W."/>
            <person name="Lecharny A."/>
            <person name="Aubourg S."/>
            <person name="Chefdor F."/>
            <person name="Cooke R."/>
            <person name="Berger C."/>
            <person name="Monfort A."/>
            <person name="Casacuberta E."/>
            <person name="Gibbons T."/>
            <person name="Weber N."/>
            <person name="Vandenbol M."/>
            <person name="Bargues M."/>
            <person name="Terol J."/>
            <person name="Torres A."/>
            <person name="Perez-Perez A."/>
            <person name="Purnelle B."/>
            <person name="Bent E."/>
            <person name="Johnson S."/>
            <person name="Tacon D."/>
            <person name="Jesse T."/>
            <person name="Heijnen L."/>
            <person name="Schwarz S."/>
            <person name="Scholler P."/>
            <person name="Heber S."/>
            <person name="Francs P."/>
            <person name="Bielke C."/>
            <person name="Frishman D."/>
            <person name="Haase D."/>
            <person name="Lemcke K."/>
            <person name="Mewes H.-W."/>
            <person name="Stocker S."/>
            <person name="Zaccaria P."/>
            <person name="Bevan M."/>
            <person name="Wilson R.K."/>
            <person name="de la Bastide M."/>
            <person name="Habermann K."/>
            <person name="Parnell L."/>
            <person name="Dedhia N."/>
            <person name="Gnoj L."/>
            <person name="Schutz K."/>
            <person name="Huang E."/>
            <person name="Spiegel L."/>
            <person name="Sekhon M."/>
            <person name="Murray J."/>
            <person name="Sheet P."/>
            <person name="Cordes M."/>
            <person name="Abu-Threideh J."/>
            <person name="Stoneking T."/>
            <person name="Kalicki J."/>
            <person name="Graves T."/>
            <person name="Harmon G."/>
            <person name="Edwards J."/>
            <person name="Latreille P."/>
            <person name="Courtney L."/>
            <person name="Cloud J."/>
            <person name="Abbott A."/>
            <person name="Scott K."/>
            <person name="Johnson D."/>
            <person name="Minx P."/>
            <person name="Bentley D."/>
            <person name="Fulton B."/>
            <person name="Miller N."/>
            <person name="Greco T."/>
            <person name="Kemp K."/>
            <person name="Kramer J."/>
            <person name="Fulton L."/>
            <person name="Mardis E."/>
            <person name="Dante M."/>
            <person name="Pepin K."/>
            <person name="Hillier L.W."/>
            <person name="Nelson J."/>
            <person name="Spieth J."/>
            <person name="Ryan E."/>
            <person name="Andrews S."/>
            <person name="Geisel C."/>
            <person name="Layman D."/>
            <person name="Du H."/>
            <person name="Ali J."/>
            <person name="Berghoff A."/>
            <person name="Jones K."/>
            <person name="Drone K."/>
            <person name="Cotton M."/>
            <person name="Joshu C."/>
            <person name="Antonoiu B."/>
            <person name="Zidanic M."/>
            <person name="Strong C."/>
            <person name="Sun H."/>
            <person name="Lamar B."/>
            <person name="Yordan C."/>
            <person name="Ma P."/>
            <person name="Zhong J."/>
            <person name="Preston R."/>
            <person name="Vil D."/>
            <person name="Shekher M."/>
            <person name="Matero A."/>
            <person name="Shah R."/>
            <person name="Swaby I.K."/>
            <person name="O'Shaughnessy A."/>
            <person name="Rodriguez M."/>
            <person name="Hoffman J."/>
            <person name="Till S."/>
            <person name="Granat S."/>
            <person name="Shohdy N."/>
            <person name="Hasegawa A."/>
            <person name="Hameed A."/>
            <person name="Lodhi M."/>
            <person name="Johnson A."/>
            <person name="Chen E."/>
            <person name="Marra M.A."/>
            <person name="Martienssen R."/>
            <person name="McCombie W.R."/>
        </authorList>
    </citation>
    <scope>NUCLEOTIDE SEQUENCE [LARGE SCALE GENOMIC DNA]</scope>
    <source>
        <strain>cv. Columbia</strain>
    </source>
</reference>
<reference key="2">
    <citation type="journal article" date="2017" name="Plant J.">
        <title>Araport11: a complete reannotation of the Arabidopsis thaliana reference genome.</title>
        <authorList>
            <person name="Cheng C.Y."/>
            <person name="Krishnakumar V."/>
            <person name="Chan A.P."/>
            <person name="Thibaud-Nissen F."/>
            <person name="Schobel S."/>
            <person name="Town C.D."/>
        </authorList>
    </citation>
    <scope>GENOME REANNOTATION</scope>
    <source>
        <strain>cv. Columbia</strain>
    </source>
</reference>
<reference key="3">
    <citation type="journal article" date="2008" name="Plant Cell">
        <title>An exocyst complex functions in plant cell growth in Arabidopsis and tobacco.</title>
        <authorList>
            <person name="Hala M."/>
            <person name="Cole R."/>
            <person name="Synek L."/>
            <person name="Drdova E."/>
            <person name="Pecenkova T."/>
            <person name="Nordheim A."/>
            <person name="Lamkemeyer T."/>
            <person name="Madlung J."/>
            <person name="Hochholdinger F."/>
            <person name="Fowler J.E."/>
            <person name="Zarsky V."/>
        </authorList>
    </citation>
    <scope>COMPONENT OF THE EXOCYST COMPLEX</scope>
</reference>
<reference key="4">
    <citation type="journal article" date="2010" name="New Phytol.">
        <title>Characterization of the Arabidopsis thaliana exocyst complex gene families by phylogenetic, expression profiling, and subcellular localization studies.</title>
        <authorList>
            <person name="Chong Y.T."/>
            <person name="Gidda S.K."/>
            <person name="Sanford C."/>
            <person name="Parkinson J."/>
            <person name="Mullen R.T."/>
            <person name="Goring D.R."/>
        </authorList>
    </citation>
    <scope>GENE FAMILY</scope>
    <scope>NOMENCLATURE</scope>
    <scope>SUBCELLULAR LOCATION</scope>
</reference>
<reference key="5">
    <citation type="journal article" date="2010" name="Plant Cell">
        <title>The Arabidopsis exocyst complex is involved in cytokinesis and cell plate maturation.</title>
        <authorList>
            <person name="Fendrych M."/>
            <person name="Synek L."/>
            <person name="Pecenkova T."/>
            <person name="Toupalova H."/>
            <person name="Cole R."/>
            <person name="Drdova E."/>
            <person name="Nebesarova J."/>
            <person name="Sedinova M."/>
            <person name="Hala M."/>
            <person name="Fowler J.E."/>
            <person name="Zarsky V."/>
        </authorList>
    </citation>
    <scope>FUNCTION</scope>
    <scope>INTERACTION WITH EXO84B</scope>
    <scope>SUBCELLULAR LOCATION</scope>
</reference>
<reference key="6">
    <citation type="journal article" date="2011" name="J. Exp. Bot.">
        <title>The role for the exocyst complex subunits Exo70B2 and Exo70H1 in the plant-pathogen interaction.</title>
        <authorList>
            <person name="Pecenkova T."/>
            <person name="Hala M."/>
            <person name="Kulich I."/>
            <person name="Kocourkova D."/>
            <person name="Drdova E."/>
            <person name="Fendrych M."/>
            <person name="Toupalova H."/>
            <person name="Zarsky V."/>
        </authorList>
    </citation>
    <scope>INTERACTION WITH EXO70H1 AND EXO70B2</scope>
    <source>
        <strain>cv. Columbia</strain>
    </source>
</reference>
<reference key="7">
    <citation type="journal article" date="2014" name="Mol. Biol. Cell">
        <title>Exo70E2 is essential for exocyst subunit recruitment and EXPO formation in both plants and animals.</title>
        <authorList>
            <person name="Ding Y."/>
            <person name="Wang J."/>
            <person name="Chun Lai J.H."/>
            <person name="Ling Chan V.H."/>
            <person name="Wang X."/>
            <person name="Cai Y."/>
            <person name="Tan X."/>
            <person name="Bao Y."/>
            <person name="Xia J."/>
            <person name="Robinson D.G."/>
            <person name="Jiang L."/>
        </authorList>
    </citation>
    <scope>SUBCELLULAR LOCATION</scope>
    <source>
        <strain>cv. Columbia</strain>
    </source>
</reference>
<reference key="8">
    <citation type="journal article" date="2022" name="J. Integr. Plant Biol.">
        <title>BYPASS1-LIKE regulates lateral root initiation via exocytic vesicular trafficking-mediated PIN recycling in Arabidopsis.</title>
        <authorList>
            <person name="Yang G."/>
            <person name="Chen B.-X."/>
            <person name="Chen T."/>
            <person name="Chen J.-H."/>
            <person name="Lin X.-Y."/>
            <person name="Yue X.-L."/>
            <person name="An L.-Z."/>
            <person name="Zhang H."/>
        </authorList>
    </citation>
    <scope>INTERACTION WITH B1L</scope>
    <source>
        <strain>cv. Columbia</strain>
    </source>
</reference>